<gene>
    <name type="primary">Camk1</name>
</gene>
<evidence type="ECO:0000250" key="1"/>
<evidence type="ECO:0000250" key="2">
    <source>
        <dbReference type="UniProtKB" id="Q14012"/>
    </source>
</evidence>
<evidence type="ECO:0000255" key="3">
    <source>
        <dbReference type="PROSITE-ProRule" id="PRU00159"/>
    </source>
</evidence>
<evidence type="ECO:0000255" key="4">
    <source>
        <dbReference type="PROSITE-ProRule" id="PRU10027"/>
    </source>
</evidence>
<evidence type="ECO:0000269" key="5">
    <source>
    </source>
</evidence>
<evidence type="ECO:0000305" key="6"/>
<sequence length="374" mass="41624">MPGAVEGPRWKQAEDIRDIYDFRDVLGTGAFSEVILAEDKRTQKLVAIKCIAKKALEGKEGSMENEIAVLHKIKHPNIVALDDIYESGGHLYLIMQLVSGGELFDRIVEKGFYTERDASRLIFQVLDAVKYLHDLGIVHRDLKPENLLYYSLDEDSKIMISDFGLSKMEDPGSVLSTACGTPGYVAPEVLAQKPYSKAVDCWSIGVIAYILLCGYPPFYDENDAKLFEQILKAEYEFDSPYWDDISDSAKDFIRHLMEKDPEKRFTCEQALQHPWIAGDTALDKNIHQSVSEQIKKNFAKSKWKQAFNATAVVRHMRKLQLGTSQEGQGQTGSHGELLTPTAGGPAAGCCCRDCCVEPGSELPPAPPPSSRAMD</sequence>
<organism>
    <name type="scientific">Mus musculus</name>
    <name type="common">Mouse</name>
    <dbReference type="NCBI Taxonomy" id="10090"/>
    <lineage>
        <taxon>Eukaryota</taxon>
        <taxon>Metazoa</taxon>
        <taxon>Chordata</taxon>
        <taxon>Craniata</taxon>
        <taxon>Vertebrata</taxon>
        <taxon>Euteleostomi</taxon>
        <taxon>Mammalia</taxon>
        <taxon>Eutheria</taxon>
        <taxon>Euarchontoglires</taxon>
        <taxon>Glires</taxon>
        <taxon>Rodentia</taxon>
        <taxon>Myomorpha</taxon>
        <taxon>Muroidea</taxon>
        <taxon>Muridae</taxon>
        <taxon>Murinae</taxon>
        <taxon>Mus</taxon>
        <taxon>Mus</taxon>
    </lineage>
</organism>
<protein>
    <recommendedName>
        <fullName>Calcium/calmodulin-dependent protein kinase type 1</fullName>
        <ecNumber>2.7.11.17</ecNumber>
    </recommendedName>
    <alternativeName>
        <fullName>CaM kinase I</fullName>
        <shortName>CaM-KI</shortName>
    </alternativeName>
    <alternativeName>
        <fullName>CaM kinase I alpha</fullName>
        <shortName>CaMKI-alpha</shortName>
    </alternativeName>
</protein>
<name>KCC1A_MOUSE</name>
<proteinExistence type="evidence at protein level"/>
<comment type="function">
    <text evidence="1 5">Calcium/calmodulin-dependent protein kinase that operates in the calcium-triggered CaMKK-CaMK1 signaling cascade and, upon calcium influx, regulates transcription activators activity, cell cycle, hormone production, cell differentiation, actin filament organization and neurite outgrowth. Recognizes the substrate consensus sequence [MVLIF]-x-R-x(2)-[ST]-x(3)-[MVLIF]. Regulates axonal extension and growth cone motility in hippocampal and cerebellar nerve cells. Upon NMDA receptor-mediated Ca(2+) elevation, promotes dendritic growth in hippocampal neurons and is essential in synapses for full long-term potentiation (LTP) and ERK2-dependent translational activation. Downstream of NMDA receptors, promotes the formation of spines and synapses in hippocampal neurons by phosphorylating ARHGEF7/BETAPIX on 'Ser-673', which results in the enhancement of ARHGEF7 activity and activation of RAC1. Promotes neuronal differentiation and neurite outgrowth by activation and phosphorylation of MARK2 on 'Ser-91', 'Ser-92', 'Ser-93' and 'Ser-294'. Promotes nuclear export of HDAC5 and binding to 14-3-3 by phosphorylation of 'Ser-259' and 'Ser-498' in the regulation of muscle cell differentiation. Regulates NUMB-mediated endocytosis by phosphorylation of NUMB on 'Ser-276' and 'Ser-295'. Involved in the regulation of basal and estrogen-stimulated migration of medulloblastoma cells through ARHGEF7/BETAPIX phosphorylation. Is required for proper activation of cyclin-D1/CDK4 complex during G1 progression in diploid fibroblasts. Plays a role in K(+) and ANG2-mediated regulation of the aldosterone synthase (CYP11B2) to produce aldosterone in the adrenal cortex. Phosphorylates EIF4G3/eIF4GII. In vitro phosphorylates CREB1, ATF1, CFTR, MYL9 and SYN1/synapsin I (By similarity).</text>
</comment>
<comment type="catalytic activity">
    <reaction>
        <text>L-seryl-[protein] + ATP = O-phospho-L-seryl-[protein] + ADP + H(+)</text>
        <dbReference type="Rhea" id="RHEA:17989"/>
        <dbReference type="Rhea" id="RHEA-COMP:9863"/>
        <dbReference type="Rhea" id="RHEA-COMP:11604"/>
        <dbReference type="ChEBI" id="CHEBI:15378"/>
        <dbReference type="ChEBI" id="CHEBI:29999"/>
        <dbReference type="ChEBI" id="CHEBI:30616"/>
        <dbReference type="ChEBI" id="CHEBI:83421"/>
        <dbReference type="ChEBI" id="CHEBI:456216"/>
        <dbReference type="EC" id="2.7.11.17"/>
    </reaction>
</comment>
<comment type="catalytic activity">
    <reaction>
        <text>L-threonyl-[protein] + ATP = O-phospho-L-threonyl-[protein] + ADP + H(+)</text>
        <dbReference type="Rhea" id="RHEA:46608"/>
        <dbReference type="Rhea" id="RHEA-COMP:11060"/>
        <dbReference type="Rhea" id="RHEA-COMP:11605"/>
        <dbReference type="ChEBI" id="CHEBI:15378"/>
        <dbReference type="ChEBI" id="CHEBI:30013"/>
        <dbReference type="ChEBI" id="CHEBI:30616"/>
        <dbReference type="ChEBI" id="CHEBI:61977"/>
        <dbReference type="ChEBI" id="CHEBI:456216"/>
        <dbReference type="EC" id="2.7.11.17"/>
    </reaction>
</comment>
<comment type="activity regulation">
    <text evidence="1">Activated by Ca(2+)/calmodulin. Binding of calmodulin results in conformational change that relieves intrasteric autoinhibition and allows phosphorylation of Thr-177 within the activation loop by CaMKK1 or CaMKK2. Phosphorylation of Thr-177 results in several fold increase in total activity. Unlike CaMK4, is unable to exhibit autonomous activity after Ca(2+)/calmodulin activation (By similarity).</text>
</comment>
<comment type="subunit">
    <text evidence="1">Monomer. Interacts with XPO1 (By similarity).</text>
</comment>
<comment type="interaction">
    <interactant intactId="EBI-911352">
        <id>Q91YS8</id>
    </interactant>
    <interactant intactId="EBI-2620699">
        <id>P29351</id>
        <label>Ptpn6</label>
    </interactant>
    <organismsDiffer>false</organismsDiffer>
    <experiments>3</experiments>
</comment>
<comment type="subcellular location">
    <subcellularLocation>
        <location evidence="1">Cytoplasm</location>
    </subcellularLocation>
    <subcellularLocation>
        <location evidence="1">Nucleus</location>
    </subcellularLocation>
    <text evidence="1">Predominantly cytoplasmic.</text>
</comment>
<comment type="tissue specificity">
    <text>Ubiquitous.</text>
</comment>
<comment type="domain">
    <text evidence="1">The autoinhibitory domain overlaps with the calmodulin binding region and interacts in the inactive folded state with the catalytic domain as a pseudosubstrate.</text>
</comment>
<comment type="PTM">
    <text>Phosphorylated by CaMKK1 and CaMKK2 on Thr-177.</text>
</comment>
<comment type="PTM">
    <text evidence="1">Polybiquitinated by the E3 ubiquitin-protein ligase complex SCF(FBXL12), leading to proteasomal degradation.</text>
</comment>
<comment type="similarity">
    <text evidence="6">Belongs to the protein kinase superfamily. CAMK Ser/Thr protein kinase family. CaMK subfamily.</text>
</comment>
<dbReference type="EC" id="2.7.11.17"/>
<dbReference type="EMBL" id="BC014825">
    <property type="protein sequence ID" value="AAH14825.1"/>
    <property type="molecule type" value="mRNA"/>
</dbReference>
<dbReference type="CCDS" id="CCDS20415.1"/>
<dbReference type="RefSeq" id="NP_598687.1">
    <property type="nucleotide sequence ID" value="NM_133926.2"/>
</dbReference>
<dbReference type="BMRB" id="Q91YS8"/>
<dbReference type="SMR" id="Q91YS8"/>
<dbReference type="BioGRID" id="206419">
    <property type="interactions" value="19"/>
</dbReference>
<dbReference type="DIP" id="DIP-37754N"/>
<dbReference type="FunCoup" id="Q91YS8">
    <property type="interactions" value="768"/>
</dbReference>
<dbReference type="IntAct" id="Q91YS8">
    <property type="interactions" value="2"/>
</dbReference>
<dbReference type="STRING" id="10090.ENSMUSP00000032409"/>
<dbReference type="GlyGen" id="Q91YS8">
    <property type="glycosylation" value="1 site, 1 O-linked glycan (1 site)"/>
</dbReference>
<dbReference type="iPTMnet" id="Q91YS8"/>
<dbReference type="PhosphoSitePlus" id="Q91YS8"/>
<dbReference type="SwissPalm" id="Q91YS8"/>
<dbReference type="jPOST" id="Q91YS8"/>
<dbReference type="PaxDb" id="10090-ENSMUSP00000032409"/>
<dbReference type="ProteomicsDB" id="301757"/>
<dbReference type="Pumba" id="Q91YS8"/>
<dbReference type="Antibodypedia" id="10278">
    <property type="antibodies" value="343 antibodies from 33 providers"/>
</dbReference>
<dbReference type="DNASU" id="52163"/>
<dbReference type="Ensembl" id="ENSMUST00000032409.15">
    <property type="protein sequence ID" value="ENSMUSP00000032409.9"/>
    <property type="gene ID" value="ENSMUSG00000030272.16"/>
</dbReference>
<dbReference type="GeneID" id="52163"/>
<dbReference type="KEGG" id="mmu:52163"/>
<dbReference type="UCSC" id="uc009dfk.1">
    <property type="organism name" value="mouse"/>
</dbReference>
<dbReference type="AGR" id="MGI:1098535"/>
<dbReference type="CTD" id="8536"/>
<dbReference type="MGI" id="MGI:1098535">
    <property type="gene designation" value="Camk1"/>
</dbReference>
<dbReference type="VEuPathDB" id="HostDB:ENSMUSG00000030272"/>
<dbReference type="eggNOG" id="KOG0032">
    <property type="taxonomic scope" value="Eukaryota"/>
</dbReference>
<dbReference type="GeneTree" id="ENSGT00940000156378"/>
<dbReference type="InParanoid" id="Q91YS8"/>
<dbReference type="OMA" id="HDWFESR"/>
<dbReference type="OrthoDB" id="40902at2759"/>
<dbReference type="PhylomeDB" id="Q91YS8"/>
<dbReference type="TreeFam" id="TF314166"/>
<dbReference type="Reactome" id="R-MMU-9619229">
    <property type="pathway name" value="Activation of RAC1 downstream of NMDARs"/>
</dbReference>
<dbReference type="BioGRID-ORCS" id="52163">
    <property type="hits" value="4 hits in 81 CRISPR screens"/>
</dbReference>
<dbReference type="ChiTaRS" id="Camk1">
    <property type="organism name" value="mouse"/>
</dbReference>
<dbReference type="PRO" id="PR:Q91YS8"/>
<dbReference type="Proteomes" id="UP000000589">
    <property type="component" value="Chromosome 6"/>
</dbReference>
<dbReference type="RNAct" id="Q91YS8">
    <property type="molecule type" value="protein"/>
</dbReference>
<dbReference type="Bgee" id="ENSMUSG00000030272">
    <property type="expression patterns" value="Expressed in superior frontal gyrus and 251 other cell types or tissues"/>
</dbReference>
<dbReference type="ExpressionAtlas" id="Q91YS8">
    <property type="expression patterns" value="baseline and differential"/>
</dbReference>
<dbReference type="GO" id="GO:0005737">
    <property type="term" value="C:cytoplasm"/>
    <property type="evidence" value="ECO:0007669"/>
    <property type="project" value="UniProtKB-SubCell"/>
</dbReference>
<dbReference type="GO" id="GO:0005634">
    <property type="term" value="C:nucleus"/>
    <property type="evidence" value="ECO:0007669"/>
    <property type="project" value="UniProtKB-SubCell"/>
</dbReference>
<dbReference type="GO" id="GO:0005524">
    <property type="term" value="F:ATP binding"/>
    <property type="evidence" value="ECO:0007669"/>
    <property type="project" value="UniProtKB-KW"/>
</dbReference>
<dbReference type="GO" id="GO:0004683">
    <property type="term" value="F:calcium/calmodulin-dependent protein kinase activity"/>
    <property type="evidence" value="ECO:0000250"/>
    <property type="project" value="UniProtKB"/>
</dbReference>
<dbReference type="GO" id="GO:0005516">
    <property type="term" value="F:calmodulin binding"/>
    <property type="evidence" value="ECO:0007669"/>
    <property type="project" value="UniProtKB-KW"/>
</dbReference>
<dbReference type="GO" id="GO:0106310">
    <property type="term" value="F:protein serine kinase activity"/>
    <property type="evidence" value="ECO:0007669"/>
    <property type="project" value="RHEA"/>
</dbReference>
<dbReference type="GO" id="GO:0030154">
    <property type="term" value="P:cell differentiation"/>
    <property type="evidence" value="ECO:0007669"/>
    <property type="project" value="UniProtKB-KW"/>
</dbReference>
<dbReference type="GO" id="GO:0035556">
    <property type="term" value="P:intracellular signal transduction"/>
    <property type="evidence" value="ECO:0007669"/>
    <property type="project" value="Ensembl"/>
</dbReference>
<dbReference type="GO" id="GO:0007399">
    <property type="term" value="P:nervous system development"/>
    <property type="evidence" value="ECO:0007669"/>
    <property type="project" value="UniProtKB-KW"/>
</dbReference>
<dbReference type="GO" id="GO:0006913">
    <property type="term" value="P:nucleocytoplasmic transport"/>
    <property type="evidence" value="ECO:0000314"/>
    <property type="project" value="MGI"/>
</dbReference>
<dbReference type="GO" id="GO:0060999">
    <property type="term" value="P:positive regulation of dendritic spine development"/>
    <property type="evidence" value="ECO:0000250"/>
    <property type="project" value="UniProtKB"/>
</dbReference>
<dbReference type="GO" id="GO:0051149">
    <property type="term" value="P:positive regulation of muscle cell differentiation"/>
    <property type="evidence" value="ECO:0007669"/>
    <property type="project" value="Ensembl"/>
</dbReference>
<dbReference type="GO" id="GO:0010976">
    <property type="term" value="P:positive regulation of neuron projection development"/>
    <property type="evidence" value="ECO:0000250"/>
    <property type="project" value="UniProtKB"/>
</dbReference>
<dbReference type="GO" id="GO:0046827">
    <property type="term" value="P:positive regulation of protein export from nucleus"/>
    <property type="evidence" value="ECO:0000314"/>
    <property type="project" value="MGI"/>
</dbReference>
<dbReference type="GO" id="GO:0071902">
    <property type="term" value="P:positive regulation of protein serine/threonine kinase activity"/>
    <property type="evidence" value="ECO:0000250"/>
    <property type="project" value="UniProtKB"/>
</dbReference>
<dbReference type="GO" id="GO:0051835">
    <property type="term" value="P:positive regulation of synapse structural plasticity"/>
    <property type="evidence" value="ECO:0000250"/>
    <property type="project" value="UniProtKB"/>
</dbReference>
<dbReference type="GO" id="GO:0060143">
    <property type="term" value="P:positive regulation of syncytium formation by plasma membrane fusion"/>
    <property type="evidence" value="ECO:0007669"/>
    <property type="project" value="Ensembl"/>
</dbReference>
<dbReference type="GO" id="GO:0045944">
    <property type="term" value="P:positive regulation of transcription by RNA polymerase II"/>
    <property type="evidence" value="ECO:0007669"/>
    <property type="project" value="Ensembl"/>
</dbReference>
<dbReference type="GO" id="GO:0051147">
    <property type="term" value="P:regulation of muscle cell differentiation"/>
    <property type="evidence" value="ECO:0000250"/>
    <property type="project" value="UniProtKB"/>
</dbReference>
<dbReference type="GO" id="GO:0043393">
    <property type="term" value="P:regulation of protein binding"/>
    <property type="evidence" value="ECO:0000250"/>
    <property type="project" value="UniProtKB"/>
</dbReference>
<dbReference type="GO" id="GO:0032880">
    <property type="term" value="P:regulation of protein localization"/>
    <property type="evidence" value="ECO:0000250"/>
    <property type="project" value="UniProtKB"/>
</dbReference>
<dbReference type="GO" id="GO:0007165">
    <property type="term" value="P:signal transduction"/>
    <property type="evidence" value="ECO:0000314"/>
    <property type="project" value="MGI"/>
</dbReference>
<dbReference type="CDD" id="cd14167">
    <property type="entry name" value="STKc_CaMKI_alpha"/>
    <property type="match status" value="1"/>
</dbReference>
<dbReference type="FunFam" id="1.10.510.10:FF:000026">
    <property type="entry name" value="Calcium/calmodulin-dependent protein kinase type 1"/>
    <property type="match status" value="1"/>
</dbReference>
<dbReference type="FunFam" id="3.30.200.20:FF:000203">
    <property type="entry name" value="Calcium/calmodulin-dependent protein kinase type 1"/>
    <property type="match status" value="1"/>
</dbReference>
<dbReference type="Gene3D" id="3.30.200.20">
    <property type="entry name" value="Phosphorylase Kinase, domain 1"/>
    <property type="match status" value="1"/>
</dbReference>
<dbReference type="Gene3D" id="1.10.510.10">
    <property type="entry name" value="Transferase(Phosphotransferase) domain 1"/>
    <property type="match status" value="1"/>
</dbReference>
<dbReference type="InterPro" id="IPR011009">
    <property type="entry name" value="Kinase-like_dom_sf"/>
</dbReference>
<dbReference type="InterPro" id="IPR000719">
    <property type="entry name" value="Prot_kinase_dom"/>
</dbReference>
<dbReference type="InterPro" id="IPR017441">
    <property type="entry name" value="Protein_kinase_ATP_BS"/>
</dbReference>
<dbReference type="InterPro" id="IPR008271">
    <property type="entry name" value="Ser/Thr_kinase_AS"/>
</dbReference>
<dbReference type="PANTHER" id="PTHR24347">
    <property type="entry name" value="SERINE/THREONINE-PROTEIN KINASE"/>
    <property type="match status" value="1"/>
</dbReference>
<dbReference type="Pfam" id="PF00069">
    <property type="entry name" value="Pkinase"/>
    <property type="match status" value="1"/>
</dbReference>
<dbReference type="SMART" id="SM00220">
    <property type="entry name" value="S_TKc"/>
    <property type="match status" value="1"/>
</dbReference>
<dbReference type="SUPFAM" id="SSF56112">
    <property type="entry name" value="Protein kinase-like (PK-like)"/>
    <property type="match status" value="1"/>
</dbReference>
<dbReference type="PROSITE" id="PS00107">
    <property type="entry name" value="PROTEIN_KINASE_ATP"/>
    <property type="match status" value="1"/>
</dbReference>
<dbReference type="PROSITE" id="PS50011">
    <property type="entry name" value="PROTEIN_KINASE_DOM"/>
    <property type="match status" value="1"/>
</dbReference>
<dbReference type="PROSITE" id="PS00108">
    <property type="entry name" value="PROTEIN_KINASE_ST"/>
    <property type="match status" value="1"/>
</dbReference>
<keyword id="KW-0021">Allosteric enzyme</keyword>
<keyword id="KW-0067">ATP-binding</keyword>
<keyword id="KW-0112">Calmodulin-binding</keyword>
<keyword id="KW-0131">Cell cycle</keyword>
<keyword id="KW-0963">Cytoplasm</keyword>
<keyword id="KW-0217">Developmental protein</keyword>
<keyword id="KW-0221">Differentiation</keyword>
<keyword id="KW-1017">Isopeptide bond</keyword>
<keyword id="KW-0418">Kinase</keyword>
<keyword id="KW-0524">Neurogenesis</keyword>
<keyword id="KW-0547">Nucleotide-binding</keyword>
<keyword id="KW-0539">Nucleus</keyword>
<keyword id="KW-0597">Phosphoprotein</keyword>
<keyword id="KW-1185">Reference proteome</keyword>
<keyword id="KW-0723">Serine/threonine-protein kinase</keyword>
<keyword id="KW-0808">Transferase</keyword>
<keyword id="KW-0832">Ubl conjugation</keyword>
<reference key="1">
    <citation type="journal article" date="2004" name="Genome Res.">
        <title>The status, quality, and expansion of the NIH full-length cDNA project: the Mammalian Gene Collection (MGC).</title>
        <authorList>
            <consortium name="The MGC Project Team"/>
        </authorList>
    </citation>
    <scope>NUCLEOTIDE SEQUENCE [LARGE SCALE MRNA]</scope>
</reference>
<reference key="2">
    <citation type="journal article" date="2004" name="J. Biol. Chem.">
        <title>Calcium activation of ERK mediated by calmodulin kinase I.</title>
        <authorList>
            <person name="Schmitt J.M."/>
            <person name="Wayman G.A."/>
            <person name="Nozaki N."/>
            <person name="Soderling T.R."/>
        </authorList>
    </citation>
    <scope>FUNCTION IN ACTIVATION OF MAPK1/ERK2</scope>
</reference>
<reference key="3">
    <citation type="journal article" date="2010" name="Cell">
        <title>A tissue-specific atlas of mouse protein phosphorylation and expression.</title>
        <authorList>
            <person name="Huttlin E.L."/>
            <person name="Jedrychowski M.P."/>
            <person name="Elias J.E."/>
            <person name="Goswami T."/>
            <person name="Rad R."/>
            <person name="Beausoleil S.A."/>
            <person name="Villen J."/>
            <person name="Haas W."/>
            <person name="Sowa M.E."/>
            <person name="Gygi S.P."/>
        </authorList>
    </citation>
    <scope>IDENTIFICATION BY MASS SPECTROMETRY [LARGE SCALE ANALYSIS]</scope>
    <source>
        <tissue>Brain</tissue>
        <tissue>Brown adipose tissue</tissue>
        <tissue>Heart</tissue>
        <tissue>Kidney</tissue>
        <tissue>Liver</tissue>
        <tissue>Lung</tissue>
        <tissue>Pancreas</tissue>
        <tissue>Spleen</tissue>
        <tissue>Testis</tissue>
    </source>
</reference>
<feature type="chain" id="PRO_0000086077" description="Calcium/calmodulin-dependent protein kinase type 1">
    <location>
        <begin position="1"/>
        <end position="374"/>
    </location>
</feature>
<feature type="domain" description="Protein kinase" evidence="3">
    <location>
        <begin position="20"/>
        <end position="276"/>
    </location>
</feature>
<feature type="region of interest" description="Autoinhibitory domain" evidence="1">
    <location>
        <begin position="276"/>
        <end position="316"/>
    </location>
</feature>
<feature type="region of interest" description="Calmodulin-binding" evidence="1">
    <location>
        <begin position="296"/>
        <end position="317"/>
    </location>
</feature>
<feature type="short sequence motif" description="Nuclear export signal" evidence="1">
    <location>
        <begin position="315"/>
        <end position="321"/>
    </location>
</feature>
<feature type="active site" description="Proton acceptor" evidence="3 4">
    <location>
        <position position="141"/>
    </location>
</feature>
<feature type="binding site" evidence="3">
    <location>
        <begin position="26"/>
        <end position="34"/>
    </location>
    <ligand>
        <name>ATP</name>
        <dbReference type="ChEBI" id="CHEBI:30616"/>
    </ligand>
</feature>
<feature type="binding site" evidence="3">
    <location>
        <position position="49"/>
    </location>
    <ligand>
        <name>ATP</name>
        <dbReference type="ChEBI" id="CHEBI:30616"/>
    </ligand>
</feature>
<feature type="modified residue" description="Phosphothreonine; by CaMKK1 and CaMKK2" evidence="2">
    <location>
        <position position="177"/>
    </location>
</feature>
<feature type="cross-link" description="Glycyl lysine isopeptide (Lys-Gly) (interchain with G-Cter in ubiquitin)" evidence="2">
    <location>
        <position position="59"/>
    </location>
</feature>
<accession>Q91YS8</accession>